<organism>
    <name type="scientific">Thermococcus onnurineus (strain NA1)</name>
    <dbReference type="NCBI Taxonomy" id="523850"/>
    <lineage>
        <taxon>Archaea</taxon>
        <taxon>Methanobacteriati</taxon>
        <taxon>Methanobacteriota</taxon>
        <taxon>Thermococci</taxon>
        <taxon>Thermococcales</taxon>
        <taxon>Thermococcaceae</taxon>
        <taxon>Thermococcus</taxon>
    </lineage>
</organism>
<protein>
    <recommendedName>
        <fullName evidence="1">Ribulose bisphosphate carboxylase</fullName>
        <shortName evidence="1">RuBisCO</shortName>
        <ecNumber evidence="1">4.1.1.39</ecNumber>
    </recommendedName>
</protein>
<accession>B6YXA9</accession>
<reference key="1">
    <citation type="journal article" date="2008" name="J. Bacteriol.">
        <title>The complete genome sequence of Thermococcus onnurineus NA1 reveals a mixed heterotrophic and carboxydotrophic metabolism.</title>
        <authorList>
            <person name="Lee H.S."/>
            <person name="Kang S.G."/>
            <person name="Bae S.S."/>
            <person name="Lim J.K."/>
            <person name="Cho Y."/>
            <person name="Kim Y.J."/>
            <person name="Jeon J.H."/>
            <person name="Cha S.-S."/>
            <person name="Kwon K.K."/>
            <person name="Kim H.-T."/>
            <person name="Park C.-J."/>
            <person name="Lee H.-W."/>
            <person name="Kim S.I."/>
            <person name="Chun J."/>
            <person name="Colwell R.R."/>
            <person name="Kim S.-J."/>
            <person name="Lee J.-H."/>
        </authorList>
    </citation>
    <scope>NUCLEOTIDE SEQUENCE [LARGE SCALE GENOMIC DNA]</scope>
    <source>
        <strain>NA1</strain>
    </source>
</reference>
<feature type="chain" id="PRO_1000137340" description="Ribulose bisphosphate carboxylase">
    <location>
        <begin position="1"/>
        <end position="444"/>
    </location>
</feature>
<feature type="active site" description="Proton acceptor" evidence="1">
    <location>
        <position position="163"/>
    </location>
</feature>
<feature type="active site" description="Proton acceptor" evidence="1">
    <location>
        <position position="281"/>
    </location>
</feature>
<feature type="binding site" evidence="1">
    <location>
        <position position="165"/>
    </location>
    <ligand>
        <name>substrate</name>
    </ligand>
</feature>
<feature type="binding site" description="via carbamate group" evidence="1">
    <location>
        <position position="189"/>
    </location>
    <ligand>
        <name>Mg(2+)</name>
        <dbReference type="ChEBI" id="CHEBI:18420"/>
    </ligand>
</feature>
<feature type="binding site" evidence="1">
    <location>
        <position position="191"/>
    </location>
    <ligand>
        <name>Mg(2+)</name>
        <dbReference type="ChEBI" id="CHEBI:18420"/>
    </ligand>
</feature>
<feature type="binding site" evidence="1">
    <location>
        <position position="192"/>
    </location>
    <ligand>
        <name>Mg(2+)</name>
        <dbReference type="ChEBI" id="CHEBI:18420"/>
    </ligand>
</feature>
<feature type="binding site" evidence="1">
    <location>
        <position position="282"/>
    </location>
    <ligand>
        <name>substrate</name>
    </ligand>
</feature>
<feature type="binding site" evidence="1">
    <location>
        <position position="314"/>
    </location>
    <ligand>
        <name>substrate</name>
    </ligand>
</feature>
<feature type="binding site" evidence="1">
    <location>
        <begin position="367"/>
        <end position="369"/>
    </location>
    <ligand>
        <name>substrate</name>
    </ligand>
</feature>
<feature type="binding site" evidence="1">
    <location>
        <begin position="389"/>
        <end position="392"/>
    </location>
    <ligand>
        <name>substrate</name>
    </ligand>
</feature>
<feature type="site" description="Transition state stabilizer" evidence="1">
    <location>
        <position position="322"/>
    </location>
</feature>
<feature type="modified residue" description="N6-carboxylysine" evidence="1">
    <location>
        <position position="189"/>
    </location>
</feature>
<gene>
    <name evidence="1" type="primary">rbcL</name>
    <name type="ordered locus">TON_1234</name>
</gene>
<name>RBL_THEON</name>
<evidence type="ECO:0000255" key="1">
    <source>
        <dbReference type="HAMAP-Rule" id="MF_01133"/>
    </source>
</evidence>
<keyword id="KW-0120">Carbon dioxide fixation</keyword>
<keyword id="KW-0456">Lyase</keyword>
<keyword id="KW-0460">Magnesium</keyword>
<keyword id="KW-0479">Metal-binding</keyword>
<keyword id="KW-0560">Oxidoreductase</keyword>
<sequence length="444" mass="49875">MVEKFDKIYDYYVDKSYEPNKKRDIIAVFRITPAEGYTIEQVAGGVAAESSTGTWTTLYNWYEEERWADLSAKAYDFIDMGDGSWIVKIAYPFHAFEEANLPGLLASIAGNVFGMRRAKGLRLEDMYFPEKLIREFSGPAFGIEGVRKMLEIKDRPIYGVVPKPKVGYSPEEFEKLSYELLLNGADYMKDDENLTSPWYNRFEERAETIAKIIEKVESETGEKKTWFANITADVREMERRLEILADLGLKHAMVDVVITGWGALEYIRDLAADYGLAIHGHRAMHATFTRNPYHGISMFVLAKLYRLIGIDQLHVGTAGAGKLEGGKWDVIQNARILREEHYKPDENDVFHLEQKFYSIKPAFPTSSGGLHPGNLPIVIDALGTDIVLQLGGGTLGHPDGPAAGARAVRQAIDALVQGIPLDEYAKTHKELARALEKWGHVTPI</sequence>
<proteinExistence type="inferred from homology"/>
<dbReference type="EC" id="4.1.1.39" evidence="1"/>
<dbReference type="EMBL" id="CP000855">
    <property type="protein sequence ID" value="ACJ16722.1"/>
    <property type="molecule type" value="Genomic_DNA"/>
</dbReference>
<dbReference type="RefSeq" id="WP_012572194.1">
    <property type="nucleotide sequence ID" value="NC_011529.1"/>
</dbReference>
<dbReference type="SMR" id="B6YXA9"/>
<dbReference type="STRING" id="523850.TON_1234"/>
<dbReference type="GeneID" id="7018257"/>
<dbReference type="KEGG" id="ton:TON_1234"/>
<dbReference type="PATRIC" id="fig|523850.10.peg.1241"/>
<dbReference type="eggNOG" id="arCOG04443">
    <property type="taxonomic scope" value="Archaea"/>
</dbReference>
<dbReference type="HOGENOM" id="CLU_031450_3_1_2"/>
<dbReference type="OrthoDB" id="52787at2157"/>
<dbReference type="Proteomes" id="UP000002727">
    <property type="component" value="Chromosome"/>
</dbReference>
<dbReference type="GO" id="GO:0000287">
    <property type="term" value="F:magnesium ion binding"/>
    <property type="evidence" value="ECO:0007669"/>
    <property type="project" value="UniProtKB-UniRule"/>
</dbReference>
<dbReference type="GO" id="GO:0016491">
    <property type="term" value="F:oxidoreductase activity"/>
    <property type="evidence" value="ECO:0007669"/>
    <property type="project" value="UniProtKB-KW"/>
</dbReference>
<dbReference type="GO" id="GO:0016984">
    <property type="term" value="F:ribulose-bisphosphate carboxylase activity"/>
    <property type="evidence" value="ECO:0007669"/>
    <property type="project" value="UniProtKB-UniRule"/>
</dbReference>
<dbReference type="GO" id="GO:0006196">
    <property type="term" value="P:AMP catabolic process"/>
    <property type="evidence" value="ECO:0007669"/>
    <property type="project" value="UniProtKB-UniRule"/>
</dbReference>
<dbReference type="GO" id="GO:0015977">
    <property type="term" value="P:carbon fixation"/>
    <property type="evidence" value="ECO:0007669"/>
    <property type="project" value="UniProtKB-KW"/>
</dbReference>
<dbReference type="CDD" id="cd08213">
    <property type="entry name" value="RuBisCO_large_III"/>
    <property type="match status" value="1"/>
</dbReference>
<dbReference type="Gene3D" id="3.20.20.110">
    <property type="entry name" value="Ribulose bisphosphate carboxylase, large subunit, C-terminal domain"/>
    <property type="match status" value="1"/>
</dbReference>
<dbReference type="Gene3D" id="3.30.70.150">
    <property type="entry name" value="RuBisCO large subunit, N-terminal domain"/>
    <property type="match status" value="1"/>
</dbReference>
<dbReference type="HAMAP" id="MF_01133">
    <property type="entry name" value="RuBisCO_L_type3"/>
    <property type="match status" value="1"/>
</dbReference>
<dbReference type="InterPro" id="IPR033966">
    <property type="entry name" value="RuBisCO"/>
</dbReference>
<dbReference type="InterPro" id="IPR017712">
    <property type="entry name" value="RuBisCO_III"/>
</dbReference>
<dbReference type="InterPro" id="IPR000685">
    <property type="entry name" value="RuBisCO_lsu_C"/>
</dbReference>
<dbReference type="InterPro" id="IPR036376">
    <property type="entry name" value="RuBisCO_lsu_C_sf"/>
</dbReference>
<dbReference type="InterPro" id="IPR017443">
    <property type="entry name" value="RuBisCO_lsu_fd_N"/>
</dbReference>
<dbReference type="InterPro" id="IPR036422">
    <property type="entry name" value="RuBisCO_lsu_N_sf"/>
</dbReference>
<dbReference type="NCBIfam" id="NF003252">
    <property type="entry name" value="PRK04208.1"/>
    <property type="match status" value="1"/>
</dbReference>
<dbReference type="NCBIfam" id="TIGR03326">
    <property type="entry name" value="rubisco_III"/>
    <property type="match status" value="1"/>
</dbReference>
<dbReference type="PANTHER" id="PTHR42704">
    <property type="entry name" value="RIBULOSE BISPHOSPHATE CARBOXYLASE"/>
    <property type="match status" value="1"/>
</dbReference>
<dbReference type="PANTHER" id="PTHR42704:SF17">
    <property type="entry name" value="RIBULOSE BISPHOSPHATE CARBOXYLASE LARGE CHAIN"/>
    <property type="match status" value="1"/>
</dbReference>
<dbReference type="Pfam" id="PF00016">
    <property type="entry name" value="RuBisCO_large"/>
    <property type="match status" value="1"/>
</dbReference>
<dbReference type="Pfam" id="PF02788">
    <property type="entry name" value="RuBisCO_large_N"/>
    <property type="match status" value="1"/>
</dbReference>
<dbReference type="SFLD" id="SFLDG01052">
    <property type="entry name" value="RuBisCO"/>
    <property type="match status" value="1"/>
</dbReference>
<dbReference type="SFLD" id="SFLDS00014">
    <property type="entry name" value="RuBisCO"/>
    <property type="match status" value="2"/>
</dbReference>
<dbReference type="SFLD" id="SFLDG00301">
    <property type="entry name" value="RuBisCO-like_proteins"/>
    <property type="match status" value="1"/>
</dbReference>
<dbReference type="SUPFAM" id="SSF51649">
    <property type="entry name" value="RuBisCo, C-terminal domain"/>
    <property type="match status" value="1"/>
</dbReference>
<dbReference type="SUPFAM" id="SSF54966">
    <property type="entry name" value="RuBisCO, large subunit, small (N-terminal) domain"/>
    <property type="match status" value="1"/>
</dbReference>
<comment type="function">
    <text evidence="1">Catalyzes the addition of molecular CO(2) and H(2)O to ribulose 1,5-bisphosphate (RuBP), generating two molecules of 3-phosphoglycerate (3-PGA). Functions in an archaeal AMP degradation pathway, together with AMP phosphorylase and R15P isomerase.</text>
</comment>
<comment type="catalytic activity">
    <reaction evidence="1">
        <text>2 (2R)-3-phosphoglycerate + 2 H(+) = D-ribulose 1,5-bisphosphate + CO2 + H2O</text>
        <dbReference type="Rhea" id="RHEA:23124"/>
        <dbReference type="ChEBI" id="CHEBI:15377"/>
        <dbReference type="ChEBI" id="CHEBI:15378"/>
        <dbReference type="ChEBI" id="CHEBI:16526"/>
        <dbReference type="ChEBI" id="CHEBI:57870"/>
        <dbReference type="ChEBI" id="CHEBI:58272"/>
        <dbReference type="EC" id="4.1.1.39"/>
    </reaction>
</comment>
<comment type="catalytic activity">
    <reaction evidence="1">
        <text>D-ribulose 1,5-bisphosphate + O2 = 2-phosphoglycolate + (2R)-3-phosphoglycerate + 2 H(+)</text>
        <dbReference type="Rhea" id="RHEA:36631"/>
        <dbReference type="ChEBI" id="CHEBI:15378"/>
        <dbReference type="ChEBI" id="CHEBI:15379"/>
        <dbReference type="ChEBI" id="CHEBI:57870"/>
        <dbReference type="ChEBI" id="CHEBI:58033"/>
        <dbReference type="ChEBI" id="CHEBI:58272"/>
    </reaction>
</comment>
<comment type="cofactor">
    <cofactor evidence="1">
        <name>Mg(2+)</name>
        <dbReference type="ChEBI" id="CHEBI:18420"/>
    </cofactor>
    <text evidence="1">Binds 1 Mg(2+) ion per subunit.</text>
</comment>
<comment type="subunit">
    <text evidence="1">Homodimer or homodecamer. In contrast to form I RuBisCO, the form III RuBisCO is composed solely of large subunits.</text>
</comment>
<comment type="miscellaneous">
    <text evidence="1">Because the Archaea possessing a type III RuBisCO are all anaerobic, it is most likely that only the carboxylase activity of RuBisCO, and not the competitive oxygenase activity (by which RuBP reacts with O(2) to form one molecule of 3-phosphoglycerate and one molecule of 2-phosphoglycolate), is biologically relevant in these strains.</text>
</comment>
<comment type="similarity">
    <text evidence="1">Belongs to the RuBisCO large chain family. Type III subfamily.</text>
</comment>